<keyword id="KW-0997">Cell inner membrane</keyword>
<keyword id="KW-1003">Cell membrane</keyword>
<keyword id="KW-0406">Ion transport</keyword>
<keyword id="KW-0464">Manganese</keyword>
<keyword id="KW-0472">Membrane</keyword>
<keyword id="KW-0812">Transmembrane</keyword>
<keyword id="KW-1133">Transmembrane helix</keyword>
<keyword id="KW-0813">Transport</keyword>
<proteinExistence type="inferred from homology"/>
<sequence length="188" mass="20117">MNITATVLLAFGMSMDAFAASIGKGATLHKPKFSEALRTGLIFGAVETLTPLIGWGMGMLASRFVLEWNHWIAFVLLIFLGGRMIIEGFRGADDEDEEPRRRHGFWLLVTTAIATSLDAMAVGVGLAFLQVNIIATALAIGCATLIMSTLGMMVGRFIGSIIGKKAEILGGLVLIGIGVQILWTHFHG</sequence>
<reference key="1">
    <citation type="journal article" date="2008" name="J. Bacteriol.">
        <title>Insights into the environmental resistance gene pool from the genome sequence of the multidrug-resistant environmental isolate Escherichia coli SMS-3-5.</title>
        <authorList>
            <person name="Fricke W.F."/>
            <person name="Wright M.S."/>
            <person name="Lindell A.H."/>
            <person name="Harkins D.M."/>
            <person name="Baker-Austin C."/>
            <person name="Ravel J."/>
            <person name="Stepanauskas R."/>
        </authorList>
    </citation>
    <scope>NUCLEOTIDE SEQUENCE [LARGE SCALE GENOMIC DNA]</scope>
    <source>
        <strain>SMS-3-5 / SECEC</strain>
    </source>
</reference>
<protein>
    <recommendedName>
        <fullName evidence="1">Probable manganese efflux pump MntP</fullName>
    </recommendedName>
</protein>
<comment type="function">
    <text evidence="1">Probably functions as a manganese efflux pump.</text>
</comment>
<comment type="subcellular location">
    <subcellularLocation>
        <location evidence="1">Cell inner membrane</location>
        <topology evidence="1">Multi-pass membrane protein</topology>
    </subcellularLocation>
</comment>
<comment type="similarity">
    <text evidence="1">Belongs to the MntP (TC 9.B.29) family.</text>
</comment>
<dbReference type="EMBL" id="CP000970">
    <property type="protein sequence ID" value="ACB19153.1"/>
    <property type="molecule type" value="Genomic_DNA"/>
</dbReference>
<dbReference type="RefSeq" id="WP_001296134.1">
    <property type="nucleotide sequence ID" value="NC_010498.1"/>
</dbReference>
<dbReference type="GeneID" id="93776070"/>
<dbReference type="KEGG" id="ecm:EcSMS35_1366"/>
<dbReference type="HOGENOM" id="CLU_096410_0_0_6"/>
<dbReference type="Proteomes" id="UP000007011">
    <property type="component" value="Chromosome"/>
</dbReference>
<dbReference type="GO" id="GO:0005886">
    <property type="term" value="C:plasma membrane"/>
    <property type="evidence" value="ECO:0007669"/>
    <property type="project" value="UniProtKB-SubCell"/>
</dbReference>
<dbReference type="GO" id="GO:0005384">
    <property type="term" value="F:manganese ion transmembrane transporter activity"/>
    <property type="evidence" value="ECO:0007669"/>
    <property type="project" value="UniProtKB-UniRule"/>
</dbReference>
<dbReference type="HAMAP" id="MF_01521">
    <property type="entry name" value="MntP_pump"/>
    <property type="match status" value="1"/>
</dbReference>
<dbReference type="InterPro" id="IPR003810">
    <property type="entry name" value="Mntp/YtaF"/>
</dbReference>
<dbReference type="InterPro" id="IPR022929">
    <property type="entry name" value="Put_MntP"/>
</dbReference>
<dbReference type="NCBIfam" id="NF008546">
    <property type="entry name" value="PRK11469.1"/>
    <property type="match status" value="1"/>
</dbReference>
<dbReference type="PANTHER" id="PTHR35529">
    <property type="entry name" value="MANGANESE EFFLUX PUMP MNTP-RELATED"/>
    <property type="match status" value="1"/>
</dbReference>
<dbReference type="PANTHER" id="PTHR35529:SF1">
    <property type="entry name" value="MANGANESE EFFLUX PUMP MNTP-RELATED"/>
    <property type="match status" value="1"/>
</dbReference>
<dbReference type="Pfam" id="PF02659">
    <property type="entry name" value="Mntp"/>
    <property type="match status" value="1"/>
</dbReference>
<organism>
    <name type="scientific">Escherichia coli (strain SMS-3-5 / SECEC)</name>
    <dbReference type="NCBI Taxonomy" id="439855"/>
    <lineage>
        <taxon>Bacteria</taxon>
        <taxon>Pseudomonadati</taxon>
        <taxon>Pseudomonadota</taxon>
        <taxon>Gammaproteobacteria</taxon>
        <taxon>Enterobacterales</taxon>
        <taxon>Enterobacteriaceae</taxon>
        <taxon>Escherichia</taxon>
    </lineage>
</organism>
<feature type="chain" id="PRO_1000200025" description="Probable manganese efflux pump MntP">
    <location>
        <begin position="1"/>
        <end position="188"/>
    </location>
</feature>
<feature type="transmembrane region" description="Helical" evidence="1">
    <location>
        <begin position="3"/>
        <end position="23"/>
    </location>
</feature>
<feature type="transmembrane region" description="Helical" evidence="1">
    <location>
        <begin position="66"/>
        <end position="86"/>
    </location>
</feature>
<feature type="transmembrane region" description="Helical" evidence="1">
    <location>
        <begin position="106"/>
        <end position="128"/>
    </location>
</feature>
<feature type="transmembrane region" description="Helical" evidence="1">
    <location>
        <begin position="143"/>
        <end position="163"/>
    </location>
</feature>
<feature type="transmembrane region" description="Helical" evidence="1">
    <location>
        <begin position="168"/>
        <end position="188"/>
    </location>
</feature>
<name>MNTP_ECOSM</name>
<accession>B1LD52</accession>
<evidence type="ECO:0000255" key="1">
    <source>
        <dbReference type="HAMAP-Rule" id="MF_01521"/>
    </source>
</evidence>
<gene>
    <name evidence="1" type="primary">mntP</name>
    <name type="synonym">yebN</name>
    <name type="ordered locus">EcSMS35_1366</name>
</gene>